<gene>
    <name evidence="1" type="primary">acpS</name>
    <name type="ordered locus">UU393</name>
</gene>
<name>ACPS_UREPA</name>
<dbReference type="EC" id="2.7.8.7" evidence="1"/>
<dbReference type="EMBL" id="AF222894">
    <property type="protein sequence ID" value="AAF30803.1"/>
    <property type="molecule type" value="Genomic_DNA"/>
</dbReference>
<dbReference type="RefSeq" id="WP_006688628.1">
    <property type="nucleotide sequence ID" value="NC_002162.1"/>
</dbReference>
<dbReference type="SMR" id="Q9PQ97"/>
<dbReference type="STRING" id="273119.UU393"/>
<dbReference type="EnsemblBacteria" id="AAF30803">
    <property type="protein sequence ID" value="AAF30803"/>
    <property type="gene ID" value="UU393"/>
</dbReference>
<dbReference type="GeneID" id="29672660"/>
<dbReference type="KEGG" id="uur:UU393"/>
<dbReference type="eggNOG" id="COG0736">
    <property type="taxonomic scope" value="Bacteria"/>
</dbReference>
<dbReference type="HOGENOM" id="CLU_089696_1_1_14"/>
<dbReference type="OrthoDB" id="404052at2"/>
<dbReference type="Proteomes" id="UP000000423">
    <property type="component" value="Chromosome"/>
</dbReference>
<dbReference type="GO" id="GO:0005737">
    <property type="term" value="C:cytoplasm"/>
    <property type="evidence" value="ECO:0007669"/>
    <property type="project" value="UniProtKB-SubCell"/>
</dbReference>
<dbReference type="GO" id="GO:0008897">
    <property type="term" value="F:holo-[acyl-carrier-protein] synthase activity"/>
    <property type="evidence" value="ECO:0007669"/>
    <property type="project" value="UniProtKB-UniRule"/>
</dbReference>
<dbReference type="GO" id="GO:0000287">
    <property type="term" value="F:magnesium ion binding"/>
    <property type="evidence" value="ECO:0007669"/>
    <property type="project" value="UniProtKB-UniRule"/>
</dbReference>
<dbReference type="GO" id="GO:0006633">
    <property type="term" value="P:fatty acid biosynthetic process"/>
    <property type="evidence" value="ECO:0007669"/>
    <property type="project" value="UniProtKB-UniRule"/>
</dbReference>
<dbReference type="Gene3D" id="3.90.470.20">
    <property type="entry name" value="4'-phosphopantetheinyl transferase domain"/>
    <property type="match status" value="1"/>
</dbReference>
<dbReference type="HAMAP" id="MF_00101">
    <property type="entry name" value="AcpS"/>
    <property type="match status" value="1"/>
</dbReference>
<dbReference type="InterPro" id="IPR008278">
    <property type="entry name" value="4-PPantetheinyl_Trfase_dom"/>
</dbReference>
<dbReference type="InterPro" id="IPR037143">
    <property type="entry name" value="4-PPantetheinyl_Trfase_dom_sf"/>
</dbReference>
<dbReference type="InterPro" id="IPR002582">
    <property type="entry name" value="ACPS"/>
</dbReference>
<dbReference type="NCBIfam" id="NF011252">
    <property type="entry name" value="PRK14658.1"/>
    <property type="match status" value="1"/>
</dbReference>
<dbReference type="Pfam" id="PF01648">
    <property type="entry name" value="ACPS"/>
    <property type="match status" value="1"/>
</dbReference>
<dbReference type="SUPFAM" id="SSF56214">
    <property type="entry name" value="4'-phosphopantetheinyl transferase"/>
    <property type="match status" value="1"/>
</dbReference>
<reference key="1">
    <citation type="journal article" date="2000" name="Nature">
        <title>The complete sequence of the mucosal pathogen Ureaplasma urealyticum.</title>
        <authorList>
            <person name="Glass J.I."/>
            <person name="Lefkowitz E.J."/>
            <person name="Glass J.S."/>
            <person name="Heiner C.R."/>
            <person name="Chen E.Y."/>
            <person name="Cassell G.H."/>
        </authorList>
    </citation>
    <scope>NUCLEOTIDE SEQUENCE [LARGE SCALE GENOMIC DNA]</scope>
    <source>
        <strain>ATCC 700970</strain>
    </source>
</reference>
<keyword id="KW-0963">Cytoplasm</keyword>
<keyword id="KW-0275">Fatty acid biosynthesis</keyword>
<keyword id="KW-0276">Fatty acid metabolism</keyword>
<keyword id="KW-0444">Lipid biosynthesis</keyword>
<keyword id="KW-0443">Lipid metabolism</keyword>
<keyword id="KW-0460">Magnesium</keyword>
<keyword id="KW-0479">Metal-binding</keyword>
<keyword id="KW-1185">Reference proteome</keyword>
<keyword id="KW-0808">Transferase</keyword>
<proteinExistence type="inferred from homology"/>
<comment type="function">
    <text evidence="1">Transfers the 4'-phosphopantetheine moiety from coenzyme A to a Ser of acyl-carrier-protein.</text>
</comment>
<comment type="catalytic activity">
    <reaction evidence="1">
        <text>apo-[ACP] + CoA = holo-[ACP] + adenosine 3',5'-bisphosphate + H(+)</text>
        <dbReference type="Rhea" id="RHEA:12068"/>
        <dbReference type="Rhea" id="RHEA-COMP:9685"/>
        <dbReference type="Rhea" id="RHEA-COMP:9690"/>
        <dbReference type="ChEBI" id="CHEBI:15378"/>
        <dbReference type="ChEBI" id="CHEBI:29999"/>
        <dbReference type="ChEBI" id="CHEBI:57287"/>
        <dbReference type="ChEBI" id="CHEBI:58343"/>
        <dbReference type="ChEBI" id="CHEBI:64479"/>
        <dbReference type="EC" id="2.7.8.7"/>
    </reaction>
</comment>
<comment type="cofactor">
    <cofactor evidence="1">
        <name>Mg(2+)</name>
        <dbReference type="ChEBI" id="CHEBI:18420"/>
    </cofactor>
</comment>
<comment type="subcellular location">
    <subcellularLocation>
        <location evidence="1">Cytoplasm</location>
    </subcellularLocation>
</comment>
<comment type="similarity">
    <text evidence="1">Belongs to the P-Pant transferase superfamily. AcpS family.</text>
</comment>
<organism>
    <name type="scientific">Ureaplasma parvum serovar 3 (strain ATCC 700970)</name>
    <dbReference type="NCBI Taxonomy" id="273119"/>
    <lineage>
        <taxon>Bacteria</taxon>
        <taxon>Bacillati</taxon>
        <taxon>Mycoplasmatota</taxon>
        <taxon>Mycoplasmoidales</taxon>
        <taxon>Mycoplasmoidaceae</taxon>
        <taxon>Ureaplasma</taxon>
    </lineage>
</organism>
<sequence length="115" mass="13507">MKLVHGIDIIEWNREELNNPLFAKRILIDNELEYYFQLNSSREKKRYLASVFACKEAVMKALKLKYGYGDILILKTENQRQVYLNKILIKELELSISYTETYIVASVVGLINNMN</sequence>
<protein>
    <recommendedName>
        <fullName evidence="1">Holo-[acyl-carrier-protein] synthase</fullName>
        <shortName evidence="1">Holo-ACP synthase</shortName>
        <ecNumber evidence="1">2.7.8.7</ecNumber>
    </recommendedName>
    <alternativeName>
        <fullName evidence="1">4'-phosphopantetheinyl transferase AcpS</fullName>
    </alternativeName>
</protein>
<accession>Q9PQ97</accession>
<evidence type="ECO:0000255" key="1">
    <source>
        <dbReference type="HAMAP-Rule" id="MF_00101"/>
    </source>
</evidence>
<feature type="chain" id="PRO_0000175725" description="Holo-[acyl-carrier-protein] synthase">
    <location>
        <begin position="1"/>
        <end position="115"/>
    </location>
</feature>
<feature type="binding site" evidence="1">
    <location>
        <position position="8"/>
    </location>
    <ligand>
        <name>Mg(2+)</name>
        <dbReference type="ChEBI" id="CHEBI:18420"/>
    </ligand>
</feature>
<feature type="binding site" evidence="1">
    <location>
        <position position="56"/>
    </location>
    <ligand>
        <name>Mg(2+)</name>
        <dbReference type="ChEBI" id="CHEBI:18420"/>
    </ligand>
</feature>